<proteinExistence type="inferred from homology"/>
<accession>B7LUY9</accession>
<keyword id="KW-0963">Cytoplasm</keyword>
<keyword id="KW-0489">Methyltransferase</keyword>
<keyword id="KW-0949">S-adenosyl-L-methionine</keyword>
<keyword id="KW-0808">Transferase</keyword>
<keyword id="KW-0819">tRNA processing</keyword>
<dbReference type="EC" id="2.1.1.223" evidence="1"/>
<dbReference type="EMBL" id="CU928158">
    <property type="protein sequence ID" value="CAQ88047.1"/>
    <property type="molecule type" value="Genomic_DNA"/>
</dbReference>
<dbReference type="SMR" id="B7LUY9"/>
<dbReference type="KEGG" id="efe:EFER_0498"/>
<dbReference type="HOGENOM" id="CLU_061983_0_0_6"/>
<dbReference type="OrthoDB" id="5383291at2"/>
<dbReference type="Proteomes" id="UP000000745">
    <property type="component" value="Chromosome"/>
</dbReference>
<dbReference type="GO" id="GO:0005737">
    <property type="term" value="C:cytoplasm"/>
    <property type="evidence" value="ECO:0007669"/>
    <property type="project" value="UniProtKB-SubCell"/>
</dbReference>
<dbReference type="GO" id="GO:0003676">
    <property type="term" value="F:nucleic acid binding"/>
    <property type="evidence" value="ECO:0007669"/>
    <property type="project" value="InterPro"/>
</dbReference>
<dbReference type="GO" id="GO:0016430">
    <property type="term" value="F:tRNA (adenine-N6)-methyltransferase activity"/>
    <property type="evidence" value="ECO:0007669"/>
    <property type="project" value="UniProtKB-UniRule"/>
</dbReference>
<dbReference type="GO" id="GO:0032259">
    <property type="term" value="P:methylation"/>
    <property type="evidence" value="ECO:0007669"/>
    <property type="project" value="UniProtKB-KW"/>
</dbReference>
<dbReference type="GO" id="GO:0008033">
    <property type="term" value="P:tRNA processing"/>
    <property type="evidence" value="ECO:0007669"/>
    <property type="project" value="UniProtKB-UniRule"/>
</dbReference>
<dbReference type="CDD" id="cd02440">
    <property type="entry name" value="AdoMet_MTases"/>
    <property type="match status" value="1"/>
</dbReference>
<dbReference type="FunFam" id="3.40.50.150:FF:000087">
    <property type="entry name" value="tRNA1(Val) (adenine(37)-N6)-methyltransferase"/>
    <property type="match status" value="1"/>
</dbReference>
<dbReference type="Gene3D" id="3.40.50.150">
    <property type="entry name" value="Vaccinia Virus protein VP39"/>
    <property type="match status" value="1"/>
</dbReference>
<dbReference type="HAMAP" id="MF_01872">
    <property type="entry name" value="tRNA_methyltr_YfiC"/>
    <property type="match status" value="1"/>
</dbReference>
<dbReference type="InterPro" id="IPR002052">
    <property type="entry name" value="DNA_methylase_N6_adenine_CS"/>
</dbReference>
<dbReference type="InterPro" id="IPR029063">
    <property type="entry name" value="SAM-dependent_MTases_sf"/>
</dbReference>
<dbReference type="InterPro" id="IPR007848">
    <property type="entry name" value="Small_mtfrase_dom"/>
</dbReference>
<dbReference type="InterPro" id="IPR050210">
    <property type="entry name" value="tRNA_Adenine-N(6)_MTase"/>
</dbReference>
<dbReference type="InterPro" id="IPR022882">
    <property type="entry name" value="tRNA_adenine-N6_MeTrfase"/>
</dbReference>
<dbReference type="NCBIfam" id="NF047853">
    <property type="entry name" value="tRm6a37MtseTrmN"/>
    <property type="match status" value="1"/>
</dbReference>
<dbReference type="PANTHER" id="PTHR47739">
    <property type="entry name" value="TRNA1(VAL) (ADENINE(37)-N6)-METHYLTRANSFERASE"/>
    <property type="match status" value="1"/>
</dbReference>
<dbReference type="PANTHER" id="PTHR47739:SF1">
    <property type="entry name" value="TRNA1(VAL) (ADENINE(37)-N6)-METHYLTRANSFERASE"/>
    <property type="match status" value="1"/>
</dbReference>
<dbReference type="Pfam" id="PF05175">
    <property type="entry name" value="MTS"/>
    <property type="match status" value="1"/>
</dbReference>
<dbReference type="SUPFAM" id="SSF53335">
    <property type="entry name" value="S-adenosyl-L-methionine-dependent methyltransferases"/>
    <property type="match status" value="1"/>
</dbReference>
<dbReference type="PROSITE" id="PS00092">
    <property type="entry name" value="N6_MTASE"/>
    <property type="match status" value="1"/>
</dbReference>
<evidence type="ECO:0000255" key="1">
    <source>
        <dbReference type="HAMAP-Rule" id="MF_01872"/>
    </source>
</evidence>
<protein>
    <recommendedName>
        <fullName evidence="1">tRNA1(Val) (adenine(37)-N6)-methyltransferase</fullName>
        <ecNumber evidence="1">2.1.1.223</ecNumber>
    </recommendedName>
    <alternativeName>
        <fullName evidence="1">tRNA m6A37 methyltransferase</fullName>
    </alternativeName>
</protein>
<organism>
    <name type="scientific">Escherichia fergusonii (strain ATCC 35469 / DSM 13698 / CCUG 18766 / IAM 14443 / JCM 21226 / LMG 7866 / NBRC 102419 / NCTC 12128 / CDC 0568-73)</name>
    <dbReference type="NCBI Taxonomy" id="585054"/>
    <lineage>
        <taxon>Bacteria</taxon>
        <taxon>Pseudomonadati</taxon>
        <taxon>Pseudomonadota</taxon>
        <taxon>Gammaproteobacteria</taxon>
        <taxon>Enterobacterales</taxon>
        <taxon>Enterobacteriaceae</taxon>
        <taxon>Escherichia</taxon>
    </lineage>
</organism>
<feature type="chain" id="PRO_0000387378" description="tRNA1(Val) (adenine(37)-N6)-methyltransferase">
    <location>
        <begin position="1"/>
        <end position="245"/>
    </location>
</feature>
<gene>
    <name evidence="1" type="primary">yfiC</name>
    <name type="ordered locus">EFER_0498</name>
</gene>
<sequence>MSQSTSVLRRNGFTFKQFFVAHDRCAMKVGTDGILLGAWAPVAGVKRCLDIGAGSGLLALMLAQRTDDSVMIDAVELESEAATQAQENINQSPWAERINIYPADIQQWITQQTARFDLIISNPPYYQQGVECATPQREQARYTTTLDHQSLLTCAAECITEEGFFCVVLPEQIGNGFTELALRMGWHLRLRTDVAENETRQPHRVLLAFSPQAGECYSDRLVIRGPDQSYSEAYTALTQAFYLFM</sequence>
<name>TRMN6_ESCF3</name>
<comment type="function">
    <text evidence="1">Specifically methylates the adenine in position 37 of tRNA(1)(Val) (anticodon cmo5UAC).</text>
</comment>
<comment type="catalytic activity">
    <reaction evidence="1">
        <text>adenosine(37) in tRNA1(Val) + S-adenosyl-L-methionine = N(6)-methyladenosine(37) in tRNA1(Val) + S-adenosyl-L-homocysteine + H(+)</text>
        <dbReference type="Rhea" id="RHEA:43160"/>
        <dbReference type="Rhea" id="RHEA-COMP:10369"/>
        <dbReference type="Rhea" id="RHEA-COMP:10370"/>
        <dbReference type="ChEBI" id="CHEBI:15378"/>
        <dbReference type="ChEBI" id="CHEBI:57856"/>
        <dbReference type="ChEBI" id="CHEBI:59789"/>
        <dbReference type="ChEBI" id="CHEBI:74411"/>
        <dbReference type="ChEBI" id="CHEBI:74449"/>
        <dbReference type="EC" id="2.1.1.223"/>
    </reaction>
</comment>
<comment type="subcellular location">
    <subcellularLocation>
        <location evidence="1">Cytoplasm</location>
    </subcellularLocation>
</comment>
<comment type="similarity">
    <text evidence="1">Belongs to the methyltransferase superfamily. tRNA (adenine-N(6)-)-methyltransferase family.</text>
</comment>
<reference key="1">
    <citation type="journal article" date="2009" name="PLoS Genet.">
        <title>Organised genome dynamics in the Escherichia coli species results in highly diverse adaptive paths.</title>
        <authorList>
            <person name="Touchon M."/>
            <person name="Hoede C."/>
            <person name="Tenaillon O."/>
            <person name="Barbe V."/>
            <person name="Baeriswyl S."/>
            <person name="Bidet P."/>
            <person name="Bingen E."/>
            <person name="Bonacorsi S."/>
            <person name="Bouchier C."/>
            <person name="Bouvet O."/>
            <person name="Calteau A."/>
            <person name="Chiapello H."/>
            <person name="Clermont O."/>
            <person name="Cruveiller S."/>
            <person name="Danchin A."/>
            <person name="Diard M."/>
            <person name="Dossat C."/>
            <person name="Karoui M.E."/>
            <person name="Frapy E."/>
            <person name="Garry L."/>
            <person name="Ghigo J.M."/>
            <person name="Gilles A.M."/>
            <person name="Johnson J."/>
            <person name="Le Bouguenec C."/>
            <person name="Lescat M."/>
            <person name="Mangenot S."/>
            <person name="Martinez-Jehanne V."/>
            <person name="Matic I."/>
            <person name="Nassif X."/>
            <person name="Oztas S."/>
            <person name="Petit M.A."/>
            <person name="Pichon C."/>
            <person name="Rouy Z."/>
            <person name="Ruf C.S."/>
            <person name="Schneider D."/>
            <person name="Tourret J."/>
            <person name="Vacherie B."/>
            <person name="Vallenet D."/>
            <person name="Medigue C."/>
            <person name="Rocha E.P.C."/>
            <person name="Denamur E."/>
        </authorList>
    </citation>
    <scope>NUCLEOTIDE SEQUENCE [LARGE SCALE GENOMIC DNA]</scope>
    <source>
        <strain>ATCC 35469 / DSM 13698 / BCRC 15582 / CCUG 18766 / IAM 14443 / JCM 21226 / LMG 7866 / NBRC 102419 / NCTC 12128 / CDC 0568-73</strain>
    </source>
</reference>